<protein>
    <recommendedName>
        <fullName evidence="1">Glutamate-1-semialdehyde 2,1-aminomutase</fullName>
        <shortName evidence="1">GSA</shortName>
        <ecNumber evidence="1">5.4.3.8</ecNumber>
    </recommendedName>
    <alternativeName>
        <fullName evidence="1">Glutamate-1-semialdehyde aminotransferase</fullName>
        <shortName evidence="1">GSA-AT</shortName>
    </alternativeName>
</protein>
<feature type="chain" id="PRO_0000120390" description="Glutamate-1-semialdehyde 2,1-aminomutase">
    <location>
        <begin position="1"/>
        <end position="432"/>
    </location>
</feature>
<feature type="modified residue" description="N6-(pyridoxal phosphate)lysine" evidence="1">
    <location>
        <position position="272"/>
    </location>
</feature>
<organism>
    <name type="scientific">Nostoc sp. (strain PCC 7120 / SAG 25.82 / UTEX 2576)</name>
    <dbReference type="NCBI Taxonomy" id="103690"/>
    <lineage>
        <taxon>Bacteria</taxon>
        <taxon>Bacillati</taxon>
        <taxon>Cyanobacteriota</taxon>
        <taxon>Cyanophyceae</taxon>
        <taxon>Nostocales</taxon>
        <taxon>Nostocaceae</taxon>
        <taxon>Nostoc</taxon>
    </lineage>
</organism>
<dbReference type="EC" id="5.4.3.8" evidence="1"/>
<dbReference type="EMBL" id="BA000019">
    <property type="protein sequence ID" value="BAB74964.1"/>
    <property type="status" value="ALT_INIT"/>
    <property type="molecule type" value="Genomic_DNA"/>
</dbReference>
<dbReference type="PIR" id="AB2214">
    <property type="entry name" value="AB2214"/>
</dbReference>
<dbReference type="RefSeq" id="WP_010997416.1">
    <property type="nucleotide sequence ID" value="NZ_RSCN01000001.1"/>
</dbReference>
<dbReference type="SMR" id="Q8YS26"/>
<dbReference type="STRING" id="103690.gene:10495303"/>
<dbReference type="KEGG" id="ana:alr3265"/>
<dbReference type="eggNOG" id="COG0001">
    <property type="taxonomic scope" value="Bacteria"/>
</dbReference>
<dbReference type="OrthoDB" id="9807885at2"/>
<dbReference type="UniPathway" id="UPA00251">
    <property type="reaction ID" value="UER00317"/>
</dbReference>
<dbReference type="UniPathway" id="UPA00668"/>
<dbReference type="Proteomes" id="UP000002483">
    <property type="component" value="Chromosome"/>
</dbReference>
<dbReference type="GO" id="GO:0005737">
    <property type="term" value="C:cytoplasm"/>
    <property type="evidence" value="ECO:0007669"/>
    <property type="project" value="UniProtKB-SubCell"/>
</dbReference>
<dbReference type="GO" id="GO:0042286">
    <property type="term" value="F:glutamate-1-semialdehyde 2,1-aminomutase activity"/>
    <property type="evidence" value="ECO:0007669"/>
    <property type="project" value="UniProtKB-UniRule"/>
</dbReference>
<dbReference type="GO" id="GO:0030170">
    <property type="term" value="F:pyridoxal phosphate binding"/>
    <property type="evidence" value="ECO:0007669"/>
    <property type="project" value="InterPro"/>
</dbReference>
<dbReference type="GO" id="GO:0008483">
    <property type="term" value="F:transaminase activity"/>
    <property type="evidence" value="ECO:0007669"/>
    <property type="project" value="InterPro"/>
</dbReference>
<dbReference type="GO" id="GO:0015995">
    <property type="term" value="P:chlorophyll biosynthetic process"/>
    <property type="evidence" value="ECO:0007669"/>
    <property type="project" value="UniProtKB-UniRule"/>
</dbReference>
<dbReference type="GO" id="GO:0006782">
    <property type="term" value="P:protoporphyrinogen IX biosynthetic process"/>
    <property type="evidence" value="ECO:0007669"/>
    <property type="project" value="UniProtKB-UniRule"/>
</dbReference>
<dbReference type="CDD" id="cd00610">
    <property type="entry name" value="OAT_like"/>
    <property type="match status" value="1"/>
</dbReference>
<dbReference type="FunFam" id="3.40.640.10:FF:000021">
    <property type="entry name" value="Glutamate-1-semialdehyde 2,1-aminomutase"/>
    <property type="match status" value="1"/>
</dbReference>
<dbReference type="FunFam" id="3.90.1150.10:FF:000012">
    <property type="entry name" value="Glutamate-1-semialdehyde 2,1-aminomutase"/>
    <property type="match status" value="1"/>
</dbReference>
<dbReference type="Gene3D" id="3.90.1150.10">
    <property type="entry name" value="Aspartate Aminotransferase, domain 1"/>
    <property type="match status" value="1"/>
</dbReference>
<dbReference type="Gene3D" id="3.40.640.10">
    <property type="entry name" value="Type I PLP-dependent aspartate aminotransferase-like (Major domain)"/>
    <property type="match status" value="1"/>
</dbReference>
<dbReference type="HAMAP" id="MF_00375">
    <property type="entry name" value="HemL_aminotrans_3"/>
    <property type="match status" value="1"/>
</dbReference>
<dbReference type="InterPro" id="IPR004639">
    <property type="entry name" value="4pyrrol_synth_GluAld_NH2Trfase"/>
</dbReference>
<dbReference type="InterPro" id="IPR005814">
    <property type="entry name" value="Aminotrans_3"/>
</dbReference>
<dbReference type="InterPro" id="IPR049704">
    <property type="entry name" value="Aminotrans_3_PPA_site"/>
</dbReference>
<dbReference type="InterPro" id="IPR015424">
    <property type="entry name" value="PyrdxlP-dep_Trfase"/>
</dbReference>
<dbReference type="InterPro" id="IPR015421">
    <property type="entry name" value="PyrdxlP-dep_Trfase_major"/>
</dbReference>
<dbReference type="InterPro" id="IPR015422">
    <property type="entry name" value="PyrdxlP-dep_Trfase_small"/>
</dbReference>
<dbReference type="NCBIfam" id="TIGR00713">
    <property type="entry name" value="hemL"/>
    <property type="match status" value="1"/>
</dbReference>
<dbReference type="NCBIfam" id="NF000818">
    <property type="entry name" value="PRK00062.1"/>
    <property type="match status" value="1"/>
</dbReference>
<dbReference type="PANTHER" id="PTHR43713">
    <property type="entry name" value="GLUTAMATE-1-SEMIALDEHYDE 2,1-AMINOMUTASE"/>
    <property type="match status" value="1"/>
</dbReference>
<dbReference type="PANTHER" id="PTHR43713:SF3">
    <property type="entry name" value="GLUTAMATE-1-SEMIALDEHYDE 2,1-AMINOMUTASE 1, CHLOROPLASTIC-RELATED"/>
    <property type="match status" value="1"/>
</dbReference>
<dbReference type="Pfam" id="PF00202">
    <property type="entry name" value="Aminotran_3"/>
    <property type="match status" value="1"/>
</dbReference>
<dbReference type="SUPFAM" id="SSF53383">
    <property type="entry name" value="PLP-dependent transferases"/>
    <property type="match status" value="1"/>
</dbReference>
<dbReference type="PROSITE" id="PS00600">
    <property type="entry name" value="AA_TRANSFER_CLASS_3"/>
    <property type="match status" value="1"/>
</dbReference>
<comment type="catalytic activity">
    <reaction evidence="1">
        <text>(S)-4-amino-5-oxopentanoate = 5-aminolevulinate</text>
        <dbReference type="Rhea" id="RHEA:14265"/>
        <dbReference type="ChEBI" id="CHEBI:57501"/>
        <dbReference type="ChEBI" id="CHEBI:356416"/>
        <dbReference type="EC" id="5.4.3.8"/>
    </reaction>
</comment>
<comment type="cofactor">
    <cofactor evidence="1">
        <name>pyridoxal 5'-phosphate</name>
        <dbReference type="ChEBI" id="CHEBI:597326"/>
    </cofactor>
</comment>
<comment type="pathway">
    <text evidence="1">Porphyrin-containing compound metabolism; protoporphyrin-IX biosynthesis; 5-aminolevulinate from L-glutamyl-tRNA(Glu): step 2/2.</text>
</comment>
<comment type="pathway">
    <text evidence="1">Porphyrin-containing compound metabolism; chlorophyll biosynthesis.</text>
</comment>
<comment type="subunit">
    <text evidence="1">Homodimer.</text>
</comment>
<comment type="subcellular location">
    <subcellularLocation>
        <location evidence="1">Cytoplasm</location>
    </subcellularLocation>
</comment>
<comment type="similarity">
    <text evidence="1">Belongs to the class-III pyridoxal-phosphate-dependent aminotransferase family. HemL subfamily.</text>
</comment>
<comment type="sequence caution" evidence="2">
    <conflict type="erroneous initiation">
        <sequence resource="EMBL-CDS" id="BAB74964"/>
    </conflict>
</comment>
<sequence>MVNTTIKTTKSQEIFAAAQNLMPGGVSSPVRAFKSVGGQPIVFDHVKGAYIWDVDGNQYIDYVGTWGPAICGHAHPDVIGALHDALEKGTSFGAPSFLENVLAEMVIAAVPSIEMVRFVNSGTEACMAVLRLMRAFTNREKVIKFEGCYHGHADMFLVKAGSGVATLGLPDSPGVPKSATSSTLTAPYNDLEAVKALFEENRDQIAGVILEPVVGNAGFITPDAGFLEGLRELTHEHGALLVFDEVMTGFRIAYGGAQEKFGVTPDLTTLGKVIGGGLPVGAYGGRRDIMSMIAPAGPVYQAGTLSGNPLAMTAGIKTLELLQKPGAYEYLERITKKLADGLLQVALETGHAACGGHISAMFGLFFTSGPVHNYEDAKNSDTAKFGRFHRGMLERGVYLAPSQFEAGFTSLAHTDEDIDQTIAIAREVLSSI</sequence>
<name>GSA_NOSS1</name>
<gene>
    <name evidence="1" type="primary">hemL</name>
    <name type="ordered locus">alr3265</name>
</gene>
<accession>Q8YS26</accession>
<reference key="1">
    <citation type="journal article" date="2001" name="DNA Res.">
        <title>Complete genomic sequence of the filamentous nitrogen-fixing cyanobacterium Anabaena sp. strain PCC 7120.</title>
        <authorList>
            <person name="Kaneko T."/>
            <person name="Nakamura Y."/>
            <person name="Wolk C.P."/>
            <person name="Kuritz T."/>
            <person name="Sasamoto S."/>
            <person name="Watanabe A."/>
            <person name="Iriguchi M."/>
            <person name="Ishikawa A."/>
            <person name="Kawashima K."/>
            <person name="Kimura T."/>
            <person name="Kishida Y."/>
            <person name="Kohara M."/>
            <person name="Matsumoto M."/>
            <person name="Matsuno A."/>
            <person name="Muraki A."/>
            <person name="Nakazaki N."/>
            <person name="Shimpo S."/>
            <person name="Sugimoto M."/>
            <person name="Takazawa M."/>
            <person name="Yamada M."/>
            <person name="Yasuda M."/>
            <person name="Tabata S."/>
        </authorList>
    </citation>
    <scope>NUCLEOTIDE SEQUENCE [LARGE SCALE GENOMIC DNA]</scope>
    <source>
        <strain>PCC 7120 / SAG 25.82 / UTEX 2576</strain>
    </source>
</reference>
<evidence type="ECO:0000255" key="1">
    <source>
        <dbReference type="HAMAP-Rule" id="MF_00375"/>
    </source>
</evidence>
<evidence type="ECO:0000305" key="2"/>
<keyword id="KW-0149">Chlorophyll biosynthesis</keyword>
<keyword id="KW-0963">Cytoplasm</keyword>
<keyword id="KW-0413">Isomerase</keyword>
<keyword id="KW-0627">Porphyrin biosynthesis</keyword>
<keyword id="KW-0663">Pyridoxal phosphate</keyword>
<keyword id="KW-1185">Reference proteome</keyword>
<proteinExistence type="inferred from homology"/>